<protein>
    <recommendedName>
        <fullName evidence="9">Proton-coupled zinc antiporter SLC30A2</fullName>
    </recommendedName>
    <alternativeName>
        <fullName evidence="10">Solute carrier family 30 member 2</fullName>
    </alternativeName>
    <alternativeName>
        <fullName>Zinc transporter 2</fullName>
        <shortName evidence="6">ZnT-2</shortName>
    </alternativeName>
</protein>
<proteinExistence type="evidence at protein level"/>
<feature type="chain" id="PRO_0000206095" description="Proton-coupled zinc antiporter SLC30A2">
    <location>
        <begin position="1"/>
        <end position="359"/>
    </location>
</feature>
<feature type="topological domain" description="Cytoplasmic" evidence="7">
    <location>
        <begin position="1"/>
        <end position="56"/>
    </location>
</feature>
<feature type="transmembrane region" description="Helical" evidence="3">
    <location>
        <begin position="57"/>
        <end position="77"/>
    </location>
</feature>
<feature type="topological domain" description="Lumenal" evidence="7">
    <location>
        <begin position="78"/>
        <end position="86"/>
    </location>
</feature>
<feature type="transmembrane region" description="Helical" evidence="3">
    <location>
        <begin position="87"/>
        <end position="107"/>
    </location>
</feature>
<feature type="topological domain" description="Cytoplasmic" evidence="7">
    <location>
        <begin position="108"/>
        <end position="123"/>
    </location>
</feature>
<feature type="transmembrane region" description="Helical" evidence="3">
    <location>
        <begin position="124"/>
        <end position="144"/>
    </location>
</feature>
<feature type="topological domain" description="Lumenal" evidence="7">
    <location>
        <begin position="145"/>
        <end position="159"/>
    </location>
</feature>
<feature type="transmembrane region" description="Helical" evidence="3">
    <location>
        <begin position="160"/>
        <end position="180"/>
    </location>
</feature>
<feature type="topological domain" description="Cytoplasmic" evidence="7">
    <location>
        <begin position="181"/>
        <end position="207"/>
    </location>
</feature>
<feature type="transmembrane region" description="Helical" evidence="3">
    <location>
        <begin position="208"/>
        <end position="228"/>
    </location>
</feature>
<feature type="topological domain" description="Lumenal" evidence="7">
    <location>
        <begin position="229"/>
        <end position="236"/>
    </location>
</feature>
<feature type="transmembrane region" description="Helical" evidence="3">
    <location>
        <begin position="237"/>
        <end position="257"/>
    </location>
</feature>
<feature type="topological domain" description="Cytoplasmic" evidence="7">
    <location>
        <begin position="258"/>
        <end position="291"/>
    </location>
</feature>
<feature type="transmembrane region" description="Helical" evidence="3">
    <location>
        <begin position="292"/>
        <end position="312"/>
    </location>
</feature>
<feature type="topological domain" description="Lumenal" evidence="7">
    <location>
        <begin position="313"/>
        <end position="359"/>
    </location>
</feature>
<feature type="short sequence motif" description="Mitochondrial localization signal" evidence="2">
    <location>
        <begin position="34"/>
        <end position="37"/>
    </location>
</feature>
<feature type="short sequence motif" description="Lysosomal targeting motif" evidence="2">
    <location>
        <begin position="281"/>
        <end position="282"/>
    </location>
</feature>
<feature type="binding site" description="in chain A" evidence="1">
    <location>
        <position position="36"/>
    </location>
    <ligand>
        <name>Zn(2+)</name>
        <dbReference type="ChEBI" id="CHEBI:29105"/>
        <label>2</label>
        <note>regulatory; ligand shared between homodimeric partners</note>
    </ligand>
</feature>
<feature type="binding site" evidence="1">
    <location>
        <position position="89"/>
    </location>
    <ligand>
        <name>Zn(2+)</name>
        <dbReference type="ChEBI" id="CHEBI:29105"/>
        <label>1</label>
        <note>transported zinc</note>
    </ligand>
</feature>
<feature type="binding site" evidence="1">
    <location>
        <position position="93"/>
    </location>
    <ligand>
        <name>Zn(2+)</name>
        <dbReference type="ChEBI" id="CHEBI:29105"/>
        <label>1</label>
        <note>transported zinc</note>
    </ligand>
</feature>
<feature type="binding site" evidence="1">
    <location>
        <position position="210"/>
    </location>
    <ligand>
        <name>Zn(2+)</name>
        <dbReference type="ChEBI" id="CHEBI:29105"/>
        <label>1</label>
        <note>transported zinc</note>
    </ligand>
</feature>
<feature type="binding site" evidence="1">
    <location>
        <position position="214"/>
    </location>
    <ligand>
        <name>Zn(2+)</name>
        <dbReference type="ChEBI" id="CHEBI:29105"/>
        <label>1</label>
        <note>transported zinc</note>
    </ligand>
</feature>
<feature type="binding site" description="in chain B" evidence="1">
    <location>
        <position position="291"/>
    </location>
    <ligand>
        <name>Zn(2+)</name>
        <dbReference type="ChEBI" id="CHEBI:29105"/>
        <label>2</label>
        <note>regulatory; ligand shared between homodimeric partners</note>
    </ligand>
</feature>
<feature type="binding site" description="in chain B" evidence="1">
    <location>
        <position position="308"/>
    </location>
    <ligand>
        <name>Zn(2+)</name>
        <dbReference type="ChEBI" id="CHEBI:29105"/>
        <label>2</label>
        <note>regulatory; ligand shared between homodimeric partners</note>
    </ligand>
</feature>
<feature type="binding site" description="in chain B" evidence="1">
    <location>
        <position position="342"/>
    </location>
    <ligand>
        <name>Zn(2+)</name>
        <dbReference type="ChEBI" id="CHEBI:29105"/>
        <label>2</label>
        <note>regulatory; ligand shared between homodimeric partners</note>
    </ligand>
</feature>
<feature type="modified residue" description="Phosphoserine" evidence="2">
    <location>
        <position position="283"/>
    </location>
</feature>
<reference key="1">
    <citation type="journal article" date="1996" name="EMBO J.">
        <title>ZnT-2, a mammalian protein that confers resistance to zinc by facilitating vesicular sequestration.</title>
        <authorList>
            <person name="Palmiter R.D."/>
            <person name="Cole T.B."/>
            <person name="Findley S.D."/>
        </authorList>
    </citation>
    <scope>NUCLEOTIDE SEQUENCE [MRNA]</scope>
    <scope>FUNCTION</scope>
    <scope>TRANSPORTER ACTIVITY</scope>
    <scope>SUBCELLULAR LOCATION</scope>
    <scope>TISSUE SPECIFICITY</scope>
    <source>
        <strain>Sprague-Dawley</strain>
        <tissue>Kidney</tissue>
    </source>
</reference>
<reference key="2">
    <citation type="journal article" date="2010" name="Proc. Natl. Acad. Sci. U.S.A.">
        <title>STAT5-glucocorticoid receptor interaction and MTF-1 regulate the expression of ZnT2 (Slc30a2) in pancreatic acinar cells.</title>
        <authorList>
            <person name="Guo L."/>
            <person name="Lichten L.A."/>
            <person name="Ryu M.S."/>
            <person name="Liuzzi J.P."/>
            <person name="Wang F."/>
            <person name="Cousins R.J."/>
        </authorList>
    </citation>
    <scope>FUNCTION</scope>
    <scope>CATALYTIC ACTIVITY</scope>
    <scope>SUBCELLULAR LOCATION</scope>
    <scope>INDUCTION BY DEXAMETHASONE</scope>
</reference>
<keyword id="KW-0050">Antiport</keyword>
<keyword id="KW-0968">Cytoplasmic vesicle</keyword>
<keyword id="KW-0967">Endosome</keyword>
<keyword id="KW-0406">Ion transport</keyword>
<keyword id="KW-0458">Lysosome</keyword>
<keyword id="KW-0472">Membrane</keyword>
<keyword id="KW-0479">Metal-binding</keyword>
<keyword id="KW-0496">Mitochondrion</keyword>
<keyword id="KW-0999">Mitochondrion inner membrane</keyword>
<keyword id="KW-0597">Phosphoprotein</keyword>
<keyword id="KW-1185">Reference proteome</keyword>
<keyword id="KW-0677">Repeat</keyword>
<keyword id="KW-0812">Transmembrane</keyword>
<keyword id="KW-1133">Transmembrane helix</keyword>
<keyword id="KW-0813">Transport</keyword>
<keyword id="KW-0862">Zinc</keyword>
<keyword id="KW-0864">Zinc transport</keyword>
<name>ZNT2_RAT</name>
<accession>Q62941</accession>
<evidence type="ECO:0000250" key="1">
    <source>
        <dbReference type="UniProtKB" id="Q8IWU4"/>
    </source>
</evidence>
<evidence type="ECO:0000250" key="2">
    <source>
        <dbReference type="UniProtKB" id="Q9BRI3"/>
    </source>
</evidence>
<evidence type="ECO:0000255" key="3"/>
<evidence type="ECO:0000269" key="4">
    <source>
    </source>
</evidence>
<evidence type="ECO:0000269" key="5">
    <source>
    </source>
</evidence>
<evidence type="ECO:0000303" key="6">
    <source>
    </source>
</evidence>
<evidence type="ECO:0000305" key="7"/>
<evidence type="ECO:0000305" key="8">
    <source>
    </source>
</evidence>
<evidence type="ECO:0000305" key="9">
    <source>
    </source>
</evidence>
<evidence type="ECO:0000312" key="10">
    <source>
        <dbReference type="RGD" id="3707"/>
    </source>
</evidence>
<comment type="function">
    <text evidence="2 4 5">Electroneutral proton-coupled antiporter concentrating zinc ions into a variety of intracellular organelles including endosomes, zymogen granules and mitochondria. Thereby, plays a crucial role in cellular zinc homeostasis to confer upon cells protection against its potential cytotoxicity (PubMed:20133611, PubMed:8617223). Regulates the zinc concentration of milk, through the transport of zinc ions into secretory vesicles of mammary cells (By similarity). By concentrating zinc ions into lysosomes participates to lysosomal-mediated cell death during early mammary gland involution (By similarity).</text>
</comment>
<comment type="catalytic activity">
    <reaction evidence="8 9">
        <text>Zn(2+)(in) + 2 H(+)(out) = Zn(2+)(out) + 2 H(+)(in)</text>
        <dbReference type="Rhea" id="RHEA:72627"/>
        <dbReference type="ChEBI" id="CHEBI:15378"/>
        <dbReference type="ChEBI" id="CHEBI:29105"/>
    </reaction>
</comment>
<comment type="subunit">
    <text evidence="2">Homodimer. Interacts (via lysosomal targeting motif) with AP3D1; in AP-3-mediated transport to lysosomes. Interacts with TMEM163.</text>
</comment>
<comment type="subcellular location">
    <subcellularLocation>
        <location evidence="9">Cytoplasmic vesicle</location>
        <location evidence="9">Secretory vesicle membrane</location>
        <topology evidence="3">Multi-pass membrane protein</topology>
    </subcellularLocation>
    <subcellularLocation>
        <location evidence="8 9">Zymogen granule membrane</location>
        <topology evidence="3">Multi-pass membrane protein</topology>
    </subcellularLocation>
    <subcellularLocation>
        <location evidence="9">Endosome membrane</location>
        <topology evidence="3">Multi-pass membrane protein</topology>
    </subcellularLocation>
    <subcellularLocation>
        <location evidence="9">Lysosome membrane</location>
        <topology evidence="3">Multi-pass membrane protein</topology>
    </subcellularLocation>
    <subcellularLocation>
        <location evidence="2">Mitochondrion inner membrane</location>
        <topology evidence="3">Multi-pass membrane protein</topology>
    </subcellularLocation>
    <text evidence="2">Localization to lysosomes is induced by TNF-alpha.</text>
</comment>
<comment type="tissue specificity">
    <text evidence="5">Detected in intestine, kidney, seminal vesicles and testis.</text>
</comment>
<comment type="induction">
    <text evidence="4">Up-regulated by dexamethasone (at protein level).</text>
</comment>
<comment type="PTM">
    <text evidence="2">Phosphorylated at Ser-283. Phosphorylation at Ser-283 prevents localization to lysosomes. Dephosphorylation of Ser-283 which triggers localization to lysosomes, accumulation of zinc into lysosomes and lysosomal-mediated cell death is induced by TNF-alpha.</text>
</comment>
<comment type="similarity">
    <text evidence="7">Belongs to the cation diffusion facilitator (CDF) transporter (TC 2.A.4) family. SLC30A subfamily.</text>
</comment>
<organism>
    <name type="scientific">Rattus norvegicus</name>
    <name type="common">Rat</name>
    <dbReference type="NCBI Taxonomy" id="10116"/>
    <lineage>
        <taxon>Eukaryota</taxon>
        <taxon>Metazoa</taxon>
        <taxon>Chordata</taxon>
        <taxon>Craniata</taxon>
        <taxon>Vertebrata</taxon>
        <taxon>Euteleostomi</taxon>
        <taxon>Mammalia</taxon>
        <taxon>Eutheria</taxon>
        <taxon>Euarchontoglires</taxon>
        <taxon>Glires</taxon>
        <taxon>Rodentia</taxon>
        <taxon>Myomorpha</taxon>
        <taxon>Muroidea</taxon>
        <taxon>Muridae</taxon>
        <taxon>Murinae</taxon>
        <taxon>Rattus</taxon>
    </lineage>
</organism>
<gene>
    <name evidence="10" type="primary">Slc30a2</name>
    <name type="synonym">Znt2</name>
</gene>
<sequence length="359" mass="39277">MASRSFFGALWKSEASRIPPVNLPSVELAVQSNHYCHAQKDSGSHPNSEKQRARRKLYVASAICLVFMIGEIIGGYLAQSLAIMTDAAHLLTDFASMLISLFSLWVSSRPATKTMNFGWQRAEILGALLSVLSIWVVTGVLVYLAVQRLISGDYEIKGDTMLITSGCAVAVNIIMGLALHQSGHGHSHGHSHEDSSQQQQNPSVRAAFIHVVGDLLQSVGVLVAAYIIYFKPEYKYVDPICTFLFSILVLGTTLTILRDVILVLMEGTPKGVDFTTVKNLLLSVDGVEALHSLHIWALTVAQPVLSVHIAIAQNVDAQAVLKVARDRLQGKFNFHTMTIQIESYSEDMKSCQECQGPSE</sequence>
<dbReference type="EMBL" id="U50927">
    <property type="protein sequence ID" value="AAB02775.1"/>
    <property type="molecule type" value="mRNA"/>
</dbReference>
<dbReference type="PIR" id="S70632">
    <property type="entry name" value="S70632"/>
</dbReference>
<dbReference type="RefSeq" id="NP_037022.1">
    <property type="nucleotide sequence ID" value="NM_012890.2"/>
</dbReference>
<dbReference type="SMR" id="Q62941"/>
<dbReference type="FunCoup" id="Q62941">
    <property type="interactions" value="46"/>
</dbReference>
<dbReference type="STRING" id="10116.ENSRNOP00000072908"/>
<dbReference type="TCDB" id="2.A.4.3.1">
    <property type="family name" value="the cation diffusion facilitator (cdf) family"/>
</dbReference>
<dbReference type="PhosphoSitePlus" id="Q62941"/>
<dbReference type="PaxDb" id="10116-ENSRNOP00000067545"/>
<dbReference type="GeneID" id="25362"/>
<dbReference type="KEGG" id="rno:25362"/>
<dbReference type="UCSC" id="RGD:3707">
    <property type="organism name" value="rat"/>
</dbReference>
<dbReference type="AGR" id="RGD:3707"/>
<dbReference type="CTD" id="7780"/>
<dbReference type="RGD" id="3707">
    <property type="gene designation" value="Slc30a2"/>
</dbReference>
<dbReference type="eggNOG" id="KOG1482">
    <property type="taxonomic scope" value="Eukaryota"/>
</dbReference>
<dbReference type="InParanoid" id="Q62941"/>
<dbReference type="OrthoDB" id="9944568at2759"/>
<dbReference type="PRO" id="PR:Q62941"/>
<dbReference type="Proteomes" id="UP000002494">
    <property type="component" value="Unplaced"/>
</dbReference>
<dbReference type="GO" id="GO:0005737">
    <property type="term" value="C:cytoplasm"/>
    <property type="evidence" value="ECO:0000266"/>
    <property type="project" value="RGD"/>
</dbReference>
<dbReference type="GO" id="GO:0010008">
    <property type="term" value="C:endosome membrane"/>
    <property type="evidence" value="ECO:0000250"/>
    <property type="project" value="UniProtKB"/>
</dbReference>
<dbReference type="GO" id="GO:0005770">
    <property type="term" value="C:late endosome"/>
    <property type="evidence" value="ECO:0000266"/>
    <property type="project" value="RGD"/>
</dbReference>
<dbReference type="GO" id="GO:0005765">
    <property type="term" value="C:lysosomal membrane"/>
    <property type="evidence" value="ECO:0000250"/>
    <property type="project" value="UniProtKB"/>
</dbReference>
<dbReference type="GO" id="GO:0005743">
    <property type="term" value="C:mitochondrial inner membrane"/>
    <property type="evidence" value="ECO:0000250"/>
    <property type="project" value="UniProtKB"/>
</dbReference>
<dbReference type="GO" id="GO:0005886">
    <property type="term" value="C:plasma membrane"/>
    <property type="evidence" value="ECO:0000318"/>
    <property type="project" value="GO_Central"/>
</dbReference>
<dbReference type="GO" id="GO:0099503">
    <property type="term" value="C:secretory vesicle"/>
    <property type="evidence" value="ECO:0000250"/>
    <property type="project" value="UniProtKB"/>
</dbReference>
<dbReference type="GO" id="GO:0030658">
    <property type="term" value="C:transport vesicle membrane"/>
    <property type="evidence" value="ECO:0007669"/>
    <property type="project" value="UniProtKB-SubCell"/>
</dbReference>
<dbReference type="GO" id="GO:0042589">
    <property type="term" value="C:zymogen granule membrane"/>
    <property type="evidence" value="ECO:0000250"/>
    <property type="project" value="UniProtKB"/>
</dbReference>
<dbReference type="GO" id="GO:0042802">
    <property type="term" value="F:identical protein binding"/>
    <property type="evidence" value="ECO:0000266"/>
    <property type="project" value="RGD"/>
</dbReference>
<dbReference type="GO" id="GO:0046872">
    <property type="term" value="F:metal ion binding"/>
    <property type="evidence" value="ECO:0007669"/>
    <property type="project" value="UniProtKB-KW"/>
</dbReference>
<dbReference type="GO" id="GO:0005385">
    <property type="term" value="F:zinc ion transmembrane transporter activity"/>
    <property type="evidence" value="ECO:0000314"/>
    <property type="project" value="RGD"/>
</dbReference>
<dbReference type="GO" id="GO:0140826">
    <property type="term" value="F:zinc:proton antiporter activity"/>
    <property type="evidence" value="ECO:0000250"/>
    <property type="project" value="UniProtKB"/>
</dbReference>
<dbReference type="GO" id="GO:0006882">
    <property type="term" value="P:intracellular zinc ion homeostasis"/>
    <property type="evidence" value="ECO:0000315"/>
    <property type="project" value="UniProtKB"/>
</dbReference>
<dbReference type="GO" id="GO:0010043">
    <property type="term" value="P:response to zinc ion"/>
    <property type="evidence" value="ECO:0000318"/>
    <property type="project" value="GO_Central"/>
</dbReference>
<dbReference type="GO" id="GO:0140916">
    <property type="term" value="P:zinc ion import into lysosome"/>
    <property type="evidence" value="ECO:0000266"/>
    <property type="project" value="RGD"/>
</dbReference>
<dbReference type="GO" id="GO:0140917">
    <property type="term" value="P:zinc ion import into mitochondrion"/>
    <property type="evidence" value="ECO:0000250"/>
    <property type="project" value="UniProtKB"/>
</dbReference>
<dbReference type="GO" id="GO:0062111">
    <property type="term" value="P:zinc ion import into organelle"/>
    <property type="evidence" value="ECO:0000266"/>
    <property type="project" value="RGD"/>
</dbReference>
<dbReference type="GO" id="GO:0140915">
    <property type="term" value="P:zinc ion import into zymogen granule"/>
    <property type="evidence" value="ECO:0000315"/>
    <property type="project" value="UniProtKB"/>
</dbReference>
<dbReference type="GO" id="GO:0071577">
    <property type="term" value="P:zinc ion transmembrane transport"/>
    <property type="evidence" value="ECO:0000318"/>
    <property type="project" value="GO_Central"/>
</dbReference>
<dbReference type="GO" id="GO:0006829">
    <property type="term" value="P:zinc ion transport"/>
    <property type="evidence" value="ECO:0000314"/>
    <property type="project" value="RGD"/>
</dbReference>
<dbReference type="FunFam" id="1.20.1510.10:FF:000011">
    <property type="entry name" value="zinc transporter 2 isoform X1"/>
    <property type="match status" value="1"/>
</dbReference>
<dbReference type="Gene3D" id="1.20.1510.10">
    <property type="entry name" value="Cation efflux protein transmembrane domain"/>
    <property type="match status" value="1"/>
</dbReference>
<dbReference type="InterPro" id="IPR002524">
    <property type="entry name" value="Cation_efflux"/>
</dbReference>
<dbReference type="InterPro" id="IPR036837">
    <property type="entry name" value="Cation_efflux_CTD_sf"/>
</dbReference>
<dbReference type="InterPro" id="IPR027469">
    <property type="entry name" value="Cation_efflux_TMD_sf"/>
</dbReference>
<dbReference type="InterPro" id="IPR050681">
    <property type="entry name" value="CDF/SLC30A"/>
</dbReference>
<dbReference type="NCBIfam" id="TIGR01297">
    <property type="entry name" value="CDF"/>
    <property type="match status" value="1"/>
</dbReference>
<dbReference type="PANTHER" id="PTHR11562">
    <property type="entry name" value="CATION EFFLUX PROTEIN/ ZINC TRANSPORTER"/>
    <property type="match status" value="1"/>
</dbReference>
<dbReference type="PANTHER" id="PTHR11562:SF51">
    <property type="entry name" value="PROTON-COUPLED ZINC ANTIPORTER SLC30A2"/>
    <property type="match status" value="1"/>
</dbReference>
<dbReference type="Pfam" id="PF01545">
    <property type="entry name" value="Cation_efflux"/>
    <property type="match status" value="1"/>
</dbReference>
<dbReference type="SUPFAM" id="SSF160240">
    <property type="entry name" value="Cation efflux protein cytoplasmic domain-like"/>
    <property type="match status" value="1"/>
</dbReference>
<dbReference type="SUPFAM" id="SSF161111">
    <property type="entry name" value="Cation efflux protein transmembrane domain-like"/>
    <property type="match status" value="1"/>
</dbReference>